<evidence type="ECO:0000255" key="1">
    <source>
        <dbReference type="HAMAP-Rule" id="MF_01438"/>
    </source>
</evidence>
<evidence type="ECO:0000255" key="2">
    <source>
        <dbReference type="PROSITE-ProRule" id="PRU01130"/>
    </source>
</evidence>
<organism>
    <name type="scientific">Clostridium botulinum (strain Loch Maree / Type A3)</name>
    <dbReference type="NCBI Taxonomy" id="498214"/>
    <lineage>
        <taxon>Bacteria</taxon>
        <taxon>Bacillati</taxon>
        <taxon>Bacillota</taxon>
        <taxon>Clostridia</taxon>
        <taxon>Eubacteriales</taxon>
        <taxon>Clostridiaceae</taxon>
        <taxon>Clostridium</taxon>
    </lineage>
</organism>
<dbReference type="EC" id="2.7.7.85" evidence="1"/>
<dbReference type="EMBL" id="CP000962">
    <property type="protein sequence ID" value="ACA54873.1"/>
    <property type="molecule type" value="Genomic_DNA"/>
</dbReference>
<dbReference type="RefSeq" id="WP_012342922.1">
    <property type="nucleotide sequence ID" value="NC_010520.1"/>
</dbReference>
<dbReference type="SMR" id="B1KTB1"/>
<dbReference type="KEGG" id="cbl:CLK_2954"/>
<dbReference type="HOGENOM" id="CLU_787128_0_0_9"/>
<dbReference type="GO" id="GO:0004016">
    <property type="term" value="F:adenylate cyclase activity"/>
    <property type="evidence" value="ECO:0007669"/>
    <property type="project" value="TreeGrafter"/>
</dbReference>
<dbReference type="GO" id="GO:0005524">
    <property type="term" value="F:ATP binding"/>
    <property type="evidence" value="ECO:0007669"/>
    <property type="project" value="UniProtKB-UniRule"/>
</dbReference>
<dbReference type="GO" id="GO:0106408">
    <property type="term" value="F:diadenylate cyclase activity"/>
    <property type="evidence" value="ECO:0007669"/>
    <property type="project" value="UniProtKB-EC"/>
</dbReference>
<dbReference type="GO" id="GO:0003677">
    <property type="term" value="F:DNA binding"/>
    <property type="evidence" value="ECO:0007669"/>
    <property type="project" value="UniProtKB-UniRule"/>
</dbReference>
<dbReference type="GO" id="GO:0006281">
    <property type="term" value="P:DNA repair"/>
    <property type="evidence" value="ECO:0007669"/>
    <property type="project" value="UniProtKB-UniRule"/>
</dbReference>
<dbReference type="FunFam" id="1.10.150.20:FF:000023">
    <property type="entry name" value="DNA integrity scanning protein DisA"/>
    <property type="match status" value="1"/>
</dbReference>
<dbReference type="FunFam" id="3.40.1700.10:FF:000001">
    <property type="entry name" value="DNA integrity scanning protein DisA"/>
    <property type="match status" value="1"/>
</dbReference>
<dbReference type="Gene3D" id="1.10.150.20">
    <property type="entry name" value="5' to 3' exonuclease, C-terminal subdomain"/>
    <property type="match status" value="1"/>
</dbReference>
<dbReference type="Gene3D" id="1.20.1260.110">
    <property type="entry name" value="DNA integrity scanning linker region"/>
    <property type="match status" value="1"/>
</dbReference>
<dbReference type="Gene3D" id="3.40.1700.10">
    <property type="entry name" value="DNA integrity scanning protein, DisA, N-terminal domain"/>
    <property type="match status" value="1"/>
</dbReference>
<dbReference type="HAMAP" id="MF_01438">
    <property type="entry name" value="DisA"/>
    <property type="match status" value="1"/>
</dbReference>
<dbReference type="InterPro" id="IPR050338">
    <property type="entry name" value="DisA"/>
</dbReference>
<dbReference type="InterPro" id="IPR038331">
    <property type="entry name" value="DisA_sf"/>
</dbReference>
<dbReference type="InterPro" id="IPR036888">
    <property type="entry name" value="DNA_integrity_DisA_N_sf"/>
</dbReference>
<dbReference type="InterPro" id="IPR018906">
    <property type="entry name" value="DNA_integrity_scan_DisA_link"/>
</dbReference>
<dbReference type="InterPro" id="IPR003390">
    <property type="entry name" value="DNA_integrity_scan_DisA_N"/>
</dbReference>
<dbReference type="InterPro" id="IPR023763">
    <property type="entry name" value="DNA_integrity_scanning_protein"/>
</dbReference>
<dbReference type="InterPro" id="IPR010994">
    <property type="entry name" value="RuvA_2-like"/>
</dbReference>
<dbReference type="NCBIfam" id="NF010009">
    <property type="entry name" value="PRK13482.1"/>
    <property type="match status" value="1"/>
</dbReference>
<dbReference type="PANTHER" id="PTHR34185">
    <property type="entry name" value="DIADENYLATE CYCLASE"/>
    <property type="match status" value="1"/>
</dbReference>
<dbReference type="PANTHER" id="PTHR34185:SF3">
    <property type="entry name" value="DNA INTEGRITY SCANNING PROTEIN DISA"/>
    <property type="match status" value="1"/>
</dbReference>
<dbReference type="Pfam" id="PF02457">
    <property type="entry name" value="DAC"/>
    <property type="match status" value="1"/>
</dbReference>
<dbReference type="Pfam" id="PF10635">
    <property type="entry name" value="DisA-linker"/>
    <property type="match status" value="1"/>
</dbReference>
<dbReference type="SUPFAM" id="SSF47781">
    <property type="entry name" value="RuvA domain 2-like"/>
    <property type="match status" value="1"/>
</dbReference>
<dbReference type="SUPFAM" id="SSF143597">
    <property type="entry name" value="YojJ-like"/>
    <property type="match status" value="1"/>
</dbReference>
<dbReference type="PROSITE" id="PS51794">
    <property type="entry name" value="DAC"/>
    <property type="match status" value="1"/>
</dbReference>
<name>DISA_CLOBM</name>
<sequence>MRIEKDKELMNILKIMAPGTPLREGLENILRAKTGGLLILGDSDQILKLVDGGFKINSEYSPSYVYELAKMDGSIVLSSDLKKILCANAQLIPDSSIPTFETGTRHRTADRVAKQTGSIVIAISQRRNIITVYKGGIKYVLRDSSIILARANQALQTLEKYVAVLDRVVNNLNILEFKDIATLFDVVTAIQRSEMVMRIVSEIERYICELGNEGRLIDMQLSELIKSVEEDGILLIRDYCRSNMEYEDIYKQIQGLSSEELLNLDGLSKIIGYTGVPLVDTLISPRGYRMINKIPRIPSNVIENLVANFNQLKCVMEASYEQLDNVEGIGEARAKAIKNGLRRLREQIMLDKV</sequence>
<keyword id="KW-0067">ATP-binding</keyword>
<keyword id="KW-0227">DNA damage</keyword>
<keyword id="KW-0234">DNA repair</keyword>
<keyword id="KW-0238">DNA-binding</keyword>
<keyword id="KW-0460">Magnesium</keyword>
<keyword id="KW-0547">Nucleotide-binding</keyword>
<keyword id="KW-0548">Nucleotidyltransferase</keyword>
<keyword id="KW-0808">Transferase</keyword>
<comment type="function">
    <text evidence="1">Participates in a DNA-damage check-point that is active prior to asymmetric division when DNA is damaged. DisA forms globular foci that rapidly scan along the chromosomes during sporulation, searching for lesions. When a lesion is present, DisA pauses at the lesion site. This triggers a cellular response that culminates in a temporary block in sporulation initiation.</text>
</comment>
<comment type="function">
    <text evidence="1">Also has diadenylate cyclase activity, catalyzing the condensation of 2 ATP molecules into cyclic di-AMP (c-di-AMP). c-di-AMP acts as a signaling molecule that couples DNA integrity with progression of sporulation. The rise in c-di-AMP level generated by DisA while scanning the chromosome, operates as a positive signal that advances sporulation; upon encountering a lesion, the DisA focus arrests at the damaged site and halts c-di-AMP synthesis.</text>
</comment>
<comment type="catalytic activity">
    <reaction evidence="1">
        <text>2 ATP = 3',3'-c-di-AMP + 2 diphosphate</text>
        <dbReference type="Rhea" id="RHEA:35655"/>
        <dbReference type="ChEBI" id="CHEBI:30616"/>
        <dbReference type="ChEBI" id="CHEBI:33019"/>
        <dbReference type="ChEBI" id="CHEBI:71500"/>
        <dbReference type="EC" id="2.7.7.85"/>
    </reaction>
</comment>
<comment type="cofactor">
    <cofactor evidence="1">
        <name>Mg(2+)</name>
        <dbReference type="ChEBI" id="CHEBI:18420"/>
    </cofactor>
</comment>
<comment type="subunit">
    <text evidence="1">Homooctamer.</text>
</comment>
<comment type="similarity">
    <text evidence="1">Belongs to the DisA family.</text>
</comment>
<accession>B1KTB1</accession>
<protein>
    <recommendedName>
        <fullName evidence="1">DNA integrity scanning protein DisA</fullName>
    </recommendedName>
    <alternativeName>
        <fullName evidence="1">Cyclic di-AMP synthase</fullName>
        <shortName evidence="1">c-di-AMP synthase</shortName>
    </alternativeName>
    <alternativeName>
        <fullName evidence="1">Diadenylate cyclase</fullName>
        <ecNumber evidence="1">2.7.7.85</ecNumber>
    </alternativeName>
</protein>
<reference key="1">
    <citation type="journal article" date="2007" name="PLoS ONE">
        <title>Analysis of the neurotoxin complex genes in Clostridium botulinum A1-A4 and B1 strains: BoNT/A3, /Ba4 and /B1 clusters are located within plasmids.</title>
        <authorList>
            <person name="Smith T.J."/>
            <person name="Hill K.K."/>
            <person name="Foley B.T."/>
            <person name="Detter J.C."/>
            <person name="Munk A.C."/>
            <person name="Bruce D.C."/>
            <person name="Doggett N.A."/>
            <person name="Smith L.A."/>
            <person name="Marks J.D."/>
            <person name="Xie G."/>
            <person name="Brettin T.S."/>
        </authorList>
    </citation>
    <scope>NUCLEOTIDE SEQUENCE [LARGE SCALE GENOMIC DNA]</scope>
    <source>
        <strain>Loch Maree / Type A3</strain>
    </source>
</reference>
<gene>
    <name evidence="1" type="primary">disA</name>
    <name type="ordered locus">CLK_2954</name>
</gene>
<proteinExistence type="inferred from homology"/>
<feature type="chain" id="PRO_1000145862" description="DNA integrity scanning protein DisA">
    <location>
        <begin position="1"/>
        <end position="353"/>
    </location>
</feature>
<feature type="domain" description="DAC" evidence="2">
    <location>
        <begin position="6"/>
        <end position="144"/>
    </location>
</feature>
<feature type="binding site" evidence="1">
    <location>
        <position position="73"/>
    </location>
    <ligand>
        <name>ATP</name>
        <dbReference type="ChEBI" id="CHEBI:30616"/>
    </ligand>
</feature>
<feature type="binding site" evidence="1">
    <location>
        <position position="91"/>
    </location>
    <ligand>
        <name>ATP</name>
        <dbReference type="ChEBI" id="CHEBI:30616"/>
    </ligand>
</feature>
<feature type="binding site" evidence="1">
    <location>
        <begin position="104"/>
        <end position="108"/>
    </location>
    <ligand>
        <name>ATP</name>
        <dbReference type="ChEBI" id="CHEBI:30616"/>
    </ligand>
</feature>